<comment type="subcellular location">
    <subcellularLocation>
        <location evidence="1">Cell membrane</location>
        <topology evidence="1">Multi-pass membrane protein</topology>
    </subcellularLocation>
</comment>
<comment type="similarity">
    <text evidence="1">Belongs to the chloride channel (TC 2.A.49) family.</text>
</comment>
<name>YFEO_ECO27</name>
<protein>
    <recommendedName>
        <fullName evidence="1">Putative ion-transport protein YfeO</fullName>
    </recommendedName>
</protein>
<feature type="chain" id="PRO_1000164033" description="Putative ion-transport protein YfeO">
    <location>
        <begin position="1"/>
        <end position="418"/>
    </location>
</feature>
<feature type="transmembrane region" description="Helical" evidence="1">
    <location>
        <begin position="10"/>
        <end position="30"/>
    </location>
</feature>
<feature type="transmembrane region" description="Helical" evidence="1">
    <location>
        <begin position="54"/>
        <end position="74"/>
    </location>
</feature>
<feature type="transmembrane region" description="Helical" evidence="1">
    <location>
        <begin position="99"/>
        <end position="119"/>
    </location>
</feature>
<feature type="transmembrane region" description="Helical" evidence="1">
    <location>
        <begin position="120"/>
        <end position="140"/>
    </location>
</feature>
<feature type="transmembrane region" description="Helical" evidence="1">
    <location>
        <begin position="149"/>
        <end position="169"/>
    </location>
</feature>
<feature type="transmembrane region" description="Helical" evidence="1">
    <location>
        <begin position="186"/>
        <end position="206"/>
    </location>
</feature>
<feature type="transmembrane region" description="Helical" evidence="1">
    <location>
        <begin position="223"/>
        <end position="243"/>
    </location>
</feature>
<feature type="transmembrane region" description="Helical" evidence="1">
    <location>
        <begin position="258"/>
        <end position="278"/>
    </location>
</feature>
<feature type="transmembrane region" description="Helical" evidence="1">
    <location>
        <begin position="300"/>
        <end position="320"/>
    </location>
</feature>
<feature type="transmembrane region" description="Helical" evidence="1">
    <location>
        <begin position="322"/>
        <end position="342"/>
    </location>
</feature>
<feature type="transmembrane region" description="Helical" evidence="1">
    <location>
        <begin position="343"/>
        <end position="363"/>
    </location>
</feature>
<feature type="transmembrane region" description="Helical" evidence="1">
    <location>
        <begin position="371"/>
        <end position="391"/>
    </location>
</feature>
<reference key="1">
    <citation type="journal article" date="2009" name="J. Bacteriol.">
        <title>Complete genome sequence and comparative genome analysis of enteropathogenic Escherichia coli O127:H6 strain E2348/69.</title>
        <authorList>
            <person name="Iguchi A."/>
            <person name="Thomson N.R."/>
            <person name="Ogura Y."/>
            <person name="Saunders D."/>
            <person name="Ooka T."/>
            <person name="Henderson I.R."/>
            <person name="Harris D."/>
            <person name="Asadulghani M."/>
            <person name="Kurokawa K."/>
            <person name="Dean P."/>
            <person name="Kenny B."/>
            <person name="Quail M.A."/>
            <person name="Thurston S."/>
            <person name="Dougan G."/>
            <person name="Hayashi T."/>
            <person name="Parkhill J."/>
            <person name="Frankel G."/>
        </authorList>
    </citation>
    <scope>NUCLEOTIDE SEQUENCE [LARGE SCALE GENOMIC DNA]</scope>
    <source>
        <strain>E2348/69 / EPEC</strain>
    </source>
</reference>
<organism>
    <name type="scientific">Escherichia coli O127:H6 (strain E2348/69 / EPEC)</name>
    <dbReference type="NCBI Taxonomy" id="574521"/>
    <lineage>
        <taxon>Bacteria</taxon>
        <taxon>Pseudomonadati</taxon>
        <taxon>Pseudomonadota</taxon>
        <taxon>Gammaproteobacteria</taxon>
        <taxon>Enterobacterales</taxon>
        <taxon>Enterobacteriaceae</taxon>
        <taxon>Escherichia</taxon>
    </lineage>
</organism>
<sequence>MLHPRARTMLLLSLPAVAIGITSSLILIMVMKIASVLQNLLWQRLPGTLGIAQDSPLWIIGVLTLTGIAVGLVIRFSQGHAGPDPACEPLIGAPIPPSALPGLIVALILGLAGGVSLGPEHPIITVNIALAVAIGARLLPRVNRMEWTILASAGTIGALFGTTVAAALIFSQTLNGSNEVPLWDRLFAPLMAAAAGALTTGLFFHPHFSLPIAHYGQMEMTDILSGAIVAAIAIAAGMVAVWCLPRLHAMMHQMKNPVFVLGIGGFILGILGVIGGPVSLFKGLDEMQQMVANQAFSTSDYFLLAVIKLAALVVAAASGFRGGRIFPAVFVGVALGLMLHEHVPAVPAAITVSCAILGIVLVVTRDGWLSLFMAAVVVPNTTLLPLLCIVMLPAWLLLAGKPMMMVNRPKQQPPHDNV</sequence>
<gene>
    <name evidence="1" type="primary">yfeO</name>
    <name type="ordered locus">E2348C_2582</name>
</gene>
<evidence type="ECO:0000255" key="1">
    <source>
        <dbReference type="HAMAP-Rule" id="MF_01115"/>
    </source>
</evidence>
<keyword id="KW-1003">Cell membrane</keyword>
<keyword id="KW-0407">Ion channel</keyword>
<keyword id="KW-0406">Ion transport</keyword>
<keyword id="KW-0472">Membrane</keyword>
<keyword id="KW-1185">Reference proteome</keyword>
<keyword id="KW-0812">Transmembrane</keyword>
<keyword id="KW-1133">Transmembrane helix</keyword>
<keyword id="KW-0813">Transport</keyword>
<dbReference type="EMBL" id="FM180568">
    <property type="protein sequence ID" value="CAS10130.1"/>
    <property type="molecule type" value="Genomic_DNA"/>
</dbReference>
<dbReference type="RefSeq" id="WP_000903165.1">
    <property type="nucleotide sequence ID" value="NC_011601.1"/>
</dbReference>
<dbReference type="SMR" id="B7UG98"/>
<dbReference type="KEGG" id="ecg:E2348C_2582"/>
<dbReference type="HOGENOM" id="CLU_053130_0_0_6"/>
<dbReference type="Proteomes" id="UP000008205">
    <property type="component" value="Chromosome"/>
</dbReference>
<dbReference type="GO" id="GO:0005886">
    <property type="term" value="C:plasma membrane"/>
    <property type="evidence" value="ECO:0007669"/>
    <property type="project" value="UniProtKB-SubCell"/>
</dbReference>
<dbReference type="GO" id="GO:0015108">
    <property type="term" value="F:chloride transmembrane transporter activity"/>
    <property type="evidence" value="ECO:0007669"/>
    <property type="project" value="InterPro"/>
</dbReference>
<dbReference type="GO" id="GO:0005216">
    <property type="term" value="F:monoatomic ion channel activity"/>
    <property type="evidence" value="ECO:0007669"/>
    <property type="project" value="UniProtKB-UniRule"/>
</dbReference>
<dbReference type="CDD" id="cd00400">
    <property type="entry name" value="Voltage_gated_ClC"/>
    <property type="match status" value="1"/>
</dbReference>
<dbReference type="FunFam" id="1.10.3080.10:FF:000007">
    <property type="entry name" value="Putative ion-transport protein YfeO"/>
    <property type="match status" value="1"/>
</dbReference>
<dbReference type="Gene3D" id="1.10.3080.10">
    <property type="entry name" value="Clc chloride channel"/>
    <property type="match status" value="1"/>
</dbReference>
<dbReference type="HAMAP" id="MF_01115">
    <property type="entry name" value="CLC_YfeO"/>
    <property type="match status" value="1"/>
</dbReference>
<dbReference type="InterPro" id="IPR022969">
    <property type="entry name" value="Chloride_channel_YfeO"/>
</dbReference>
<dbReference type="InterPro" id="IPR014743">
    <property type="entry name" value="Cl-channel_core"/>
</dbReference>
<dbReference type="InterPro" id="IPR001807">
    <property type="entry name" value="ClC"/>
</dbReference>
<dbReference type="InterPro" id="IPR050368">
    <property type="entry name" value="ClC-type_chloride_channel"/>
</dbReference>
<dbReference type="NCBIfam" id="NF002971">
    <property type="entry name" value="PRK03655.1"/>
    <property type="match status" value="1"/>
</dbReference>
<dbReference type="PANTHER" id="PTHR43427">
    <property type="entry name" value="CHLORIDE CHANNEL PROTEIN CLC-E"/>
    <property type="match status" value="1"/>
</dbReference>
<dbReference type="PANTHER" id="PTHR43427:SF9">
    <property type="entry name" value="ION-TRANSPORT PROTEIN YFEO-RELATED"/>
    <property type="match status" value="1"/>
</dbReference>
<dbReference type="Pfam" id="PF00654">
    <property type="entry name" value="Voltage_CLC"/>
    <property type="match status" value="1"/>
</dbReference>
<dbReference type="PRINTS" id="PR00762">
    <property type="entry name" value="CLCHANNEL"/>
</dbReference>
<dbReference type="SUPFAM" id="SSF81340">
    <property type="entry name" value="Clc chloride channel"/>
    <property type="match status" value="1"/>
</dbReference>
<accession>B7UG98</accession>
<proteinExistence type="inferred from homology"/>